<gene>
    <name type="primary">ykt6</name>
    <name type="ORF">DDB_G0291656</name>
</gene>
<comment type="function">
    <text evidence="1">Vesicular soluble NSF attachment protein receptor (v-SNARE) mediating vesicle docking and fusion to a specific acceptor cellular compartment. Functions in endoplasmic reticulum to Golgi transport and in early/recycling endosome to TGN transport as part of a SNARE complex. Has a S-palmitoyl transferase activity (By similarity).</text>
</comment>
<comment type="subunit">
    <text evidence="1">May be found in 2 different SNARE complexes.</text>
</comment>
<comment type="subcellular location">
    <subcellularLocation>
        <location evidence="1">Cytoplasm</location>
        <location evidence="1">Cytosol</location>
    </subcellularLocation>
    <subcellularLocation>
        <location evidence="1">Cytoplasmic vesicle membrane</location>
        <topology evidence="1">Lipid-anchor</topology>
        <orientation evidence="1">Cytoplasmic side</orientation>
    </subcellularLocation>
    <subcellularLocation>
        <location evidence="1">Golgi apparatus membrane</location>
        <topology evidence="1">Lipid-anchor</topology>
        <orientation evidence="1">Cytoplasmic side</orientation>
    </subcellularLocation>
    <subcellularLocation>
        <location evidence="1">Cytoplasmic vesicle</location>
        <location evidence="1">Phagosome membrane</location>
        <topology evidence="1">Lipid-anchor</topology>
        <orientation evidence="1">Cytoplasmic side</orientation>
    </subcellularLocation>
    <subcellularLocation>
        <location evidence="1">Endosome membrane</location>
        <topology evidence="1">Lipid-anchor</topology>
        <orientation evidence="1">Cytoplasmic side</orientation>
    </subcellularLocation>
    <text evidence="1">Probably cycles through vesicles between Golgi and endosomes.</text>
</comment>
<comment type="similarity">
    <text evidence="4">Belongs to the synaptobrevin family.</text>
</comment>
<keyword id="KW-0175">Coiled coil</keyword>
<keyword id="KW-0963">Cytoplasm</keyword>
<keyword id="KW-0968">Cytoplasmic vesicle</keyword>
<keyword id="KW-0967">Endosome</keyword>
<keyword id="KW-0931">ER-Golgi transport</keyword>
<keyword id="KW-0333">Golgi apparatus</keyword>
<keyword id="KW-0449">Lipoprotein</keyword>
<keyword id="KW-0472">Membrane</keyword>
<keyword id="KW-0488">Methylation</keyword>
<keyword id="KW-0564">Palmitate</keyword>
<keyword id="KW-0636">Prenylation</keyword>
<keyword id="KW-0653">Protein transport</keyword>
<keyword id="KW-1185">Reference proteome</keyword>
<keyword id="KW-0808">Transferase</keyword>
<keyword id="KW-0813">Transport</keyword>
<accession>Q54ES8</accession>
<dbReference type="EC" id="2.3.1.-"/>
<dbReference type="EMBL" id="AAFI02000177">
    <property type="protein sequence ID" value="EAL61812.1"/>
    <property type="molecule type" value="Genomic_DNA"/>
</dbReference>
<dbReference type="RefSeq" id="XP_635162.1">
    <property type="nucleotide sequence ID" value="XM_630070.1"/>
</dbReference>
<dbReference type="SMR" id="Q54ES8"/>
<dbReference type="FunCoup" id="Q54ES8">
    <property type="interactions" value="1306"/>
</dbReference>
<dbReference type="STRING" id="44689.Q54ES8"/>
<dbReference type="PaxDb" id="44689-DDB0238214"/>
<dbReference type="EnsemblProtists" id="EAL61812">
    <property type="protein sequence ID" value="EAL61812"/>
    <property type="gene ID" value="DDB_G0291656"/>
</dbReference>
<dbReference type="GeneID" id="8628108"/>
<dbReference type="KEGG" id="ddi:DDB_G0291656"/>
<dbReference type="dictyBase" id="DDB_G0291656">
    <property type="gene designation" value="ykt6"/>
</dbReference>
<dbReference type="VEuPathDB" id="AmoebaDB:DDB_G0291656"/>
<dbReference type="eggNOG" id="KOG0861">
    <property type="taxonomic scope" value="Eukaryota"/>
</dbReference>
<dbReference type="HOGENOM" id="CLU_074848_2_1_1"/>
<dbReference type="InParanoid" id="Q54ES8"/>
<dbReference type="OMA" id="HYIGIIR"/>
<dbReference type="PhylomeDB" id="Q54ES8"/>
<dbReference type="PRO" id="PR:Q54ES8"/>
<dbReference type="Proteomes" id="UP000002195">
    <property type="component" value="Chromosome 6"/>
</dbReference>
<dbReference type="GO" id="GO:0005829">
    <property type="term" value="C:cytosol"/>
    <property type="evidence" value="ECO:0007669"/>
    <property type="project" value="UniProtKB-SubCell"/>
</dbReference>
<dbReference type="GO" id="GO:0010008">
    <property type="term" value="C:endosome membrane"/>
    <property type="evidence" value="ECO:0007669"/>
    <property type="project" value="UniProtKB-SubCell"/>
</dbReference>
<dbReference type="GO" id="GO:0005794">
    <property type="term" value="C:Golgi apparatus"/>
    <property type="evidence" value="ECO:0000318"/>
    <property type="project" value="GO_Central"/>
</dbReference>
<dbReference type="GO" id="GO:0000139">
    <property type="term" value="C:Golgi membrane"/>
    <property type="evidence" value="ECO:0007669"/>
    <property type="project" value="UniProtKB-SubCell"/>
</dbReference>
<dbReference type="GO" id="GO:0045335">
    <property type="term" value="C:phagocytic vesicle"/>
    <property type="evidence" value="ECO:0007005"/>
    <property type="project" value="dictyBase"/>
</dbReference>
<dbReference type="GO" id="GO:0030670">
    <property type="term" value="C:phagocytic vesicle membrane"/>
    <property type="evidence" value="ECO:0007669"/>
    <property type="project" value="UniProtKB-SubCell"/>
</dbReference>
<dbReference type="GO" id="GO:0005484">
    <property type="term" value="F:SNAP receptor activity"/>
    <property type="evidence" value="ECO:0000318"/>
    <property type="project" value="GO_Central"/>
</dbReference>
<dbReference type="GO" id="GO:0016740">
    <property type="term" value="F:transferase activity"/>
    <property type="evidence" value="ECO:0007669"/>
    <property type="project" value="UniProtKB-KW"/>
</dbReference>
<dbReference type="GO" id="GO:0006888">
    <property type="term" value="P:endoplasmic reticulum to Golgi vesicle-mediated transport"/>
    <property type="evidence" value="ECO:0000318"/>
    <property type="project" value="GO_Central"/>
</dbReference>
<dbReference type="GO" id="GO:0006971">
    <property type="term" value="P:hypotonic response"/>
    <property type="evidence" value="ECO:0007007"/>
    <property type="project" value="dictyBase"/>
</dbReference>
<dbReference type="GO" id="GO:0015031">
    <property type="term" value="P:protein transport"/>
    <property type="evidence" value="ECO:0007669"/>
    <property type="project" value="UniProtKB-KW"/>
</dbReference>
<dbReference type="CDD" id="cd14824">
    <property type="entry name" value="Longin"/>
    <property type="match status" value="1"/>
</dbReference>
<dbReference type="Gene3D" id="1.20.5.110">
    <property type="match status" value="1"/>
</dbReference>
<dbReference type="Gene3D" id="3.30.450.50">
    <property type="entry name" value="Longin domain"/>
    <property type="match status" value="1"/>
</dbReference>
<dbReference type="InterPro" id="IPR011012">
    <property type="entry name" value="Longin-like_dom_sf"/>
</dbReference>
<dbReference type="InterPro" id="IPR010908">
    <property type="entry name" value="Longin_dom"/>
</dbReference>
<dbReference type="InterPro" id="IPR042855">
    <property type="entry name" value="V_SNARE_CC"/>
</dbReference>
<dbReference type="PANTHER" id="PTHR45806">
    <property type="entry name" value="SYNAPTOBREVIN HOMOLOG YKT6"/>
    <property type="match status" value="1"/>
</dbReference>
<dbReference type="PANTHER" id="PTHR45806:SF2">
    <property type="entry name" value="SYNAPTOBREVIN HOMOLOG YKT6-RELATED"/>
    <property type="match status" value="1"/>
</dbReference>
<dbReference type="Pfam" id="PF00957">
    <property type="entry name" value="Synaptobrevin"/>
    <property type="match status" value="1"/>
</dbReference>
<dbReference type="SMART" id="SM01270">
    <property type="entry name" value="Longin"/>
    <property type="match status" value="1"/>
</dbReference>
<dbReference type="SUPFAM" id="SSF58038">
    <property type="entry name" value="SNARE fusion complex"/>
    <property type="match status" value="1"/>
</dbReference>
<dbReference type="SUPFAM" id="SSF64356">
    <property type="entry name" value="SNARE-like"/>
    <property type="match status" value="1"/>
</dbReference>
<dbReference type="PROSITE" id="PS50859">
    <property type="entry name" value="LONGIN"/>
    <property type="match status" value="1"/>
</dbReference>
<dbReference type="PROSITE" id="PS50892">
    <property type="entry name" value="V_SNARE"/>
    <property type="match status" value="1"/>
</dbReference>
<organism>
    <name type="scientific">Dictyostelium discoideum</name>
    <name type="common">Social amoeba</name>
    <dbReference type="NCBI Taxonomy" id="44689"/>
    <lineage>
        <taxon>Eukaryota</taxon>
        <taxon>Amoebozoa</taxon>
        <taxon>Evosea</taxon>
        <taxon>Eumycetozoa</taxon>
        <taxon>Dictyostelia</taxon>
        <taxon>Dictyosteliales</taxon>
        <taxon>Dictyosteliaceae</taxon>
        <taxon>Dictyostelium</taxon>
    </lineage>
</organism>
<protein>
    <recommendedName>
        <fullName>Putative synaptobrevin homolog YKT6</fullName>
        <ecNumber>2.3.1.-</ecNumber>
    </recommendedName>
    <alternativeName>
        <fullName>Putative prenylated SNARE protein ykt6</fullName>
    </alternativeName>
</protein>
<feature type="chain" id="PRO_0000328314" description="Putative synaptobrevin homolog YKT6">
    <location>
        <begin position="1"/>
        <end position="199"/>
    </location>
</feature>
<feature type="propeptide" id="PRO_0000396668" description="Removed in mature form" evidence="1">
    <location>
        <begin position="200"/>
        <end position="202"/>
    </location>
</feature>
<feature type="domain" description="Longin" evidence="2">
    <location>
        <begin position="7"/>
        <end position="129"/>
    </location>
</feature>
<feature type="domain" description="v-SNARE coiled-coil homology" evidence="3">
    <location>
        <begin position="142"/>
        <end position="202"/>
    </location>
</feature>
<feature type="modified residue" description="Cysteine methyl ester" evidence="1">
    <location>
        <position position="199"/>
    </location>
</feature>
<feature type="lipid moiety-binding region" description="S-palmitoyl cysteine" evidence="1">
    <location>
        <position position="198"/>
    </location>
</feature>
<feature type="lipid moiety-binding region" description="S-farnesyl cysteine" evidence="1">
    <location>
        <position position="199"/>
    </location>
</feature>
<proteinExistence type="evidence at protein level"/>
<sequence>MKVYSIGLFKVVPGNKPVLLNIVYELSSFGFFQRGSVKEVSLFVSRETVGRTNVGERVSMEHTQTQKVCHTTVDSKGLGCSVLTDSEYPGRVAHTLIRICLEEFYKVHPESEWRGLQSDVELQTPALDQLLLKYQNPETADPMMNLQKNLDETITIVKKTVEQLGQRGEKLDDLAAKSDDLSFQSKAFMNNAERMNKCCGYV</sequence>
<name>YKT6_DICDI</name>
<reference key="1">
    <citation type="journal article" date="2005" name="Nature">
        <title>The genome of the social amoeba Dictyostelium discoideum.</title>
        <authorList>
            <person name="Eichinger L."/>
            <person name="Pachebat J.A."/>
            <person name="Gloeckner G."/>
            <person name="Rajandream M.A."/>
            <person name="Sucgang R."/>
            <person name="Berriman M."/>
            <person name="Song J."/>
            <person name="Olsen R."/>
            <person name="Szafranski K."/>
            <person name="Xu Q."/>
            <person name="Tunggal B."/>
            <person name="Kummerfeld S."/>
            <person name="Madera M."/>
            <person name="Konfortov B.A."/>
            <person name="Rivero F."/>
            <person name="Bankier A.T."/>
            <person name="Lehmann R."/>
            <person name="Hamlin N."/>
            <person name="Davies R."/>
            <person name="Gaudet P."/>
            <person name="Fey P."/>
            <person name="Pilcher K."/>
            <person name="Chen G."/>
            <person name="Saunders D."/>
            <person name="Sodergren E.J."/>
            <person name="Davis P."/>
            <person name="Kerhornou A."/>
            <person name="Nie X."/>
            <person name="Hall N."/>
            <person name="Anjard C."/>
            <person name="Hemphill L."/>
            <person name="Bason N."/>
            <person name="Farbrother P."/>
            <person name="Desany B."/>
            <person name="Just E."/>
            <person name="Morio T."/>
            <person name="Rost R."/>
            <person name="Churcher C.M."/>
            <person name="Cooper J."/>
            <person name="Haydock S."/>
            <person name="van Driessche N."/>
            <person name="Cronin A."/>
            <person name="Goodhead I."/>
            <person name="Muzny D.M."/>
            <person name="Mourier T."/>
            <person name="Pain A."/>
            <person name="Lu M."/>
            <person name="Harper D."/>
            <person name="Lindsay R."/>
            <person name="Hauser H."/>
            <person name="James K.D."/>
            <person name="Quiles M."/>
            <person name="Madan Babu M."/>
            <person name="Saito T."/>
            <person name="Buchrieser C."/>
            <person name="Wardroper A."/>
            <person name="Felder M."/>
            <person name="Thangavelu M."/>
            <person name="Johnson D."/>
            <person name="Knights A."/>
            <person name="Loulseged H."/>
            <person name="Mungall K.L."/>
            <person name="Oliver K."/>
            <person name="Price C."/>
            <person name="Quail M.A."/>
            <person name="Urushihara H."/>
            <person name="Hernandez J."/>
            <person name="Rabbinowitsch E."/>
            <person name="Steffen D."/>
            <person name="Sanders M."/>
            <person name="Ma J."/>
            <person name="Kohara Y."/>
            <person name="Sharp S."/>
            <person name="Simmonds M.N."/>
            <person name="Spiegler S."/>
            <person name="Tivey A."/>
            <person name="Sugano S."/>
            <person name="White B."/>
            <person name="Walker D."/>
            <person name="Woodward J.R."/>
            <person name="Winckler T."/>
            <person name="Tanaka Y."/>
            <person name="Shaulsky G."/>
            <person name="Schleicher M."/>
            <person name="Weinstock G.M."/>
            <person name="Rosenthal A."/>
            <person name="Cox E.C."/>
            <person name="Chisholm R.L."/>
            <person name="Gibbs R.A."/>
            <person name="Loomis W.F."/>
            <person name="Platzer M."/>
            <person name="Kay R.R."/>
            <person name="Williams J.G."/>
            <person name="Dear P.H."/>
            <person name="Noegel A.A."/>
            <person name="Barrell B.G."/>
            <person name="Kuspa A."/>
        </authorList>
    </citation>
    <scope>NUCLEOTIDE SEQUENCE [LARGE SCALE GENOMIC DNA]</scope>
    <source>
        <strain>AX4</strain>
    </source>
</reference>
<reference key="2">
    <citation type="journal article" date="2006" name="Mol. Cell. Proteomics">
        <title>Proteomics fingerprinting of phagosome maturation and evidence for the role of a Galpha during uptake.</title>
        <authorList>
            <person name="Gotthardt D."/>
            <person name="Blancheteau V."/>
            <person name="Bosserhoff A."/>
            <person name="Ruppert T."/>
            <person name="Delorenzi M."/>
            <person name="Soldati T."/>
        </authorList>
    </citation>
    <scope>IDENTIFICATION BY MASS SPECTROMETRY [LARGE SCALE ANALYSIS]</scope>
    <source>
        <strain>AX2</strain>
    </source>
</reference>
<evidence type="ECO:0000250" key="1"/>
<evidence type="ECO:0000255" key="2">
    <source>
        <dbReference type="PROSITE-ProRule" id="PRU00231"/>
    </source>
</evidence>
<evidence type="ECO:0000255" key="3">
    <source>
        <dbReference type="PROSITE-ProRule" id="PRU00290"/>
    </source>
</evidence>
<evidence type="ECO:0000305" key="4"/>